<feature type="chain" id="PRO_0000211379" description="UPF0320 protein YOL166W-A">
    <location>
        <begin position="1"/>
        <end position="51"/>
    </location>
</feature>
<reference key="1">
    <citation type="journal article" date="1997" name="Nature">
        <title>The nucleotide sequence of Saccharomyces cerevisiae chromosome XV.</title>
        <authorList>
            <person name="Dujon B."/>
            <person name="Albermann K."/>
            <person name="Aldea M."/>
            <person name="Alexandraki D."/>
            <person name="Ansorge W."/>
            <person name="Arino J."/>
            <person name="Benes V."/>
            <person name="Bohn C."/>
            <person name="Bolotin-Fukuhara M."/>
            <person name="Bordonne R."/>
            <person name="Boyer J."/>
            <person name="Camasses A."/>
            <person name="Casamayor A."/>
            <person name="Casas C."/>
            <person name="Cheret G."/>
            <person name="Cziepluch C."/>
            <person name="Daignan-Fornier B."/>
            <person name="Dang V.-D."/>
            <person name="de Haan M."/>
            <person name="Delius H."/>
            <person name="Durand P."/>
            <person name="Fairhead C."/>
            <person name="Feldmann H."/>
            <person name="Gaillon L."/>
            <person name="Galisson F."/>
            <person name="Gamo F.-J."/>
            <person name="Gancedo C."/>
            <person name="Goffeau A."/>
            <person name="Goulding S.E."/>
            <person name="Grivell L.A."/>
            <person name="Habbig B."/>
            <person name="Hand N.J."/>
            <person name="Hani J."/>
            <person name="Hattenhorst U."/>
            <person name="Hebling U."/>
            <person name="Hernando Y."/>
            <person name="Herrero E."/>
            <person name="Heumann K."/>
            <person name="Hiesel R."/>
            <person name="Hilger F."/>
            <person name="Hofmann B."/>
            <person name="Hollenberg C.P."/>
            <person name="Hughes B."/>
            <person name="Jauniaux J.-C."/>
            <person name="Kalogeropoulos A."/>
            <person name="Katsoulou C."/>
            <person name="Kordes E."/>
            <person name="Lafuente M.J."/>
            <person name="Landt O."/>
            <person name="Louis E.J."/>
            <person name="Maarse A.C."/>
            <person name="Madania A."/>
            <person name="Mannhaupt G."/>
            <person name="Marck C."/>
            <person name="Martin R.P."/>
            <person name="Mewes H.-W."/>
            <person name="Michaux G."/>
            <person name="Paces V."/>
            <person name="Parle-McDermott A.G."/>
            <person name="Pearson B.M."/>
            <person name="Perrin A."/>
            <person name="Pettersson B."/>
            <person name="Poch O."/>
            <person name="Pohl T.M."/>
            <person name="Poirey R."/>
            <person name="Portetelle D."/>
            <person name="Pujol A."/>
            <person name="Purnelle B."/>
            <person name="Ramezani Rad M."/>
            <person name="Rechmann S."/>
            <person name="Schwager C."/>
            <person name="Schweizer M."/>
            <person name="Sor F."/>
            <person name="Sterky F."/>
            <person name="Tarassov I.A."/>
            <person name="Teodoru C."/>
            <person name="Tettelin H."/>
            <person name="Thierry A."/>
            <person name="Tobiasch E."/>
            <person name="Tzermia M."/>
            <person name="Uhlen M."/>
            <person name="Unseld M."/>
            <person name="Valens M."/>
            <person name="Vandenbol M."/>
            <person name="Vetter I."/>
            <person name="Vlcek C."/>
            <person name="Voet M."/>
            <person name="Volckaert G."/>
            <person name="Voss H."/>
            <person name="Wambutt R."/>
            <person name="Wedler H."/>
            <person name="Wiemann S."/>
            <person name="Winsor B."/>
            <person name="Wolfe K.H."/>
            <person name="Zollner A."/>
            <person name="Zumstein E."/>
            <person name="Kleine K."/>
        </authorList>
    </citation>
    <scope>NUCLEOTIDE SEQUENCE [LARGE SCALE GENOMIC DNA]</scope>
    <source>
        <strain>ATCC 204508 / S288c</strain>
    </source>
</reference>
<reference key="2">
    <citation type="journal article" date="2014" name="G3 (Bethesda)">
        <title>The reference genome sequence of Saccharomyces cerevisiae: Then and now.</title>
        <authorList>
            <person name="Engel S.R."/>
            <person name="Dietrich F.S."/>
            <person name="Fisk D.G."/>
            <person name="Binkley G."/>
            <person name="Balakrishnan R."/>
            <person name="Costanzo M.C."/>
            <person name="Dwight S.S."/>
            <person name="Hitz B.C."/>
            <person name="Karra K."/>
            <person name="Nash R.S."/>
            <person name="Weng S."/>
            <person name="Wong E.D."/>
            <person name="Lloyd P."/>
            <person name="Skrzypek M.S."/>
            <person name="Miyasato S.R."/>
            <person name="Simison M."/>
            <person name="Cherry J.M."/>
        </authorList>
    </citation>
    <scope>GENOME REANNOTATION</scope>
    <source>
        <strain>ATCC 204508 / S288c</strain>
    </source>
</reference>
<reference key="3">
    <citation type="journal article" date="2002" name="Nat. Biotechnol.">
        <title>An integrated approach for finding overlooked genes in yeast.</title>
        <authorList>
            <person name="Kumar A."/>
            <person name="Harrison P.M."/>
            <person name="Cheung K.-H."/>
            <person name="Lan N."/>
            <person name="Echols N."/>
            <person name="Bertone P."/>
            <person name="Miller P."/>
            <person name="Gerstein M.B."/>
            <person name="Snyder M."/>
        </authorList>
    </citation>
    <scope>NUCLEOTIDE SEQUENCE [GENOMIC DNA]</scope>
</reference>
<proteinExistence type="inferred from homology"/>
<evidence type="ECO:0000305" key="1"/>
<comment type="similarity">
    <text evidence="1">Belongs to the UPF0320 family.</text>
</comment>
<sequence>MHGACLSGLYPLPFTHKFHDYLHFNIYISFGGPKYCITALNTYVILFYTVY</sequence>
<organism>
    <name type="scientific">Saccharomyces cerevisiae (strain ATCC 204508 / S288c)</name>
    <name type="common">Baker's yeast</name>
    <dbReference type="NCBI Taxonomy" id="559292"/>
    <lineage>
        <taxon>Eukaryota</taxon>
        <taxon>Fungi</taxon>
        <taxon>Dikarya</taxon>
        <taxon>Ascomycota</taxon>
        <taxon>Saccharomycotina</taxon>
        <taxon>Saccharomycetes</taxon>
        <taxon>Saccharomycetales</taxon>
        <taxon>Saccharomycetaceae</taxon>
        <taxon>Saccharomyces</taxon>
    </lineage>
</organism>
<name>YO16A_YEAST</name>
<dbReference type="EMBL" id="Z74908">
    <property type="status" value="NOT_ANNOTATED_CDS"/>
    <property type="molecule type" value="Genomic_DNA"/>
</dbReference>
<dbReference type="EMBL" id="AF480017">
    <property type="protein sequence ID" value="AAL79330.1"/>
    <property type="molecule type" value="Genomic_DNA"/>
</dbReference>
<dbReference type="EMBL" id="BK006948">
    <property type="protein sequence ID" value="DAA10619.1"/>
    <property type="molecule type" value="Genomic_DNA"/>
</dbReference>
<dbReference type="RefSeq" id="NP_878160.1">
    <property type="nucleotide sequence ID" value="NM_001184623.1"/>
</dbReference>
<dbReference type="BioGRID" id="37014">
    <property type="interactions" value="39"/>
</dbReference>
<dbReference type="FunCoup" id="Q8TGJ1">
    <property type="interactions" value="14"/>
</dbReference>
<dbReference type="STRING" id="4932.YOL166W-A"/>
<dbReference type="PaxDb" id="4932-YOL166W-A"/>
<dbReference type="EnsemblFungi" id="YOL166W-A_mRNA">
    <property type="protein sequence ID" value="YOL166W-A"/>
    <property type="gene ID" value="YOL166W-A"/>
</dbReference>
<dbReference type="GeneID" id="1466472"/>
<dbReference type="KEGG" id="sce:YOL166W-A"/>
<dbReference type="AGR" id="SGD:S000028709"/>
<dbReference type="SGD" id="S000028709">
    <property type="gene designation" value="YOL166W-A"/>
</dbReference>
<dbReference type="VEuPathDB" id="FungiDB:YOL166W-A"/>
<dbReference type="GeneTree" id="ENSGT00940000177535"/>
<dbReference type="HOGENOM" id="CLU_3108211_0_0_1"/>
<dbReference type="InParanoid" id="Q8TGJ1"/>
<dbReference type="BioCyc" id="YEAST:G3O-33906-MONOMER"/>
<dbReference type="PRO" id="PR:Q8TGJ1"/>
<dbReference type="Proteomes" id="UP000002311">
    <property type="component" value="Chromosome XV"/>
</dbReference>
<dbReference type="RNAct" id="Q8TGJ1">
    <property type="molecule type" value="protein"/>
</dbReference>
<dbReference type="InterPro" id="IPR007414">
    <property type="entry name" value="DUF468"/>
</dbReference>
<dbReference type="Pfam" id="PF04318">
    <property type="entry name" value="DUF468"/>
    <property type="match status" value="1"/>
</dbReference>
<accession>Q8TGJ1</accession>
<accession>D6W1Q3</accession>
<keyword id="KW-1185">Reference proteome</keyword>
<gene>
    <name type="ordered locus">YOL166W-A</name>
</gene>
<protein>
    <recommendedName>
        <fullName>UPF0320 protein YOL166W-A</fullName>
    </recommendedName>
</protein>